<dbReference type="EC" id="4.1.1.37" evidence="1"/>
<dbReference type="EMBL" id="AP009247">
    <property type="protein sequence ID" value="BAF62027.1"/>
    <property type="molecule type" value="Genomic_DNA"/>
</dbReference>
<dbReference type="RefSeq" id="WP_011930296.1">
    <property type="nucleotide sequence ID" value="NC_009465.1"/>
</dbReference>
<dbReference type="SMR" id="A5CVK5"/>
<dbReference type="STRING" id="412965.COSY_0928"/>
<dbReference type="KEGG" id="vok:COSY_0928"/>
<dbReference type="eggNOG" id="COG0407">
    <property type="taxonomic scope" value="Bacteria"/>
</dbReference>
<dbReference type="HOGENOM" id="CLU_040933_0_0_6"/>
<dbReference type="OrthoDB" id="9806656at2"/>
<dbReference type="UniPathway" id="UPA00251">
    <property type="reaction ID" value="UER00321"/>
</dbReference>
<dbReference type="Proteomes" id="UP000000247">
    <property type="component" value="Chromosome"/>
</dbReference>
<dbReference type="GO" id="GO:0005829">
    <property type="term" value="C:cytosol"/>
    <property type="evidence" value="ECO:0007669"/>
    <property type="project" value="TreeGrafter"/>
</dbReference>
<dbReference type="GO" id="GO:0004853">
    <property type="term" value="F:uroporphyrinogen decarboxylase activity"/>
    <property type="evidence" value="ECO:0007669"/>
    <property type="project" value="UniProtKB-UniRule"/>
</dbReference>
<dbReference type="GO" id="GO:0019353">
    <property type="term" value="P:protoporphyrinogen IX biosynthetic process from glutamate"/>
    <property type="evidence" value="ECO:0007669"/>
    <property type="project" value="TreeGrafter"/>
</dbReference>
<dbReference type="CDD" id="cd00717">
    <property type="entry name" value="URO-D"/>
    <property type="match status" value="1"/>
</dbReference>
<dbReference type="FunFam" id="3.20.20.210:FF:000001">
    <property type="entry name" value="Uroporphyrinogen decarboxylase"/>
    <property type="match status" value="1"/>
</dbReference>
<dbReference type="Gene3D" id="3.20.20.210">
    <property type="match status" value="1"/>
</dbReference>
<dbReference type="HAMAP" id="MF_00218">
    <property type="entry name" value="URO_D"/>
    <property type="match status" value="1"/>
</dbReference>
<dbReference type="InterPro" id="IPR038071">
    <property type="entry name" value="UROD/MetE-like_sf"/>
</dbReference>
<dbReference type="InterPro" id="IPR006361">
    <property type="entry name" value="Uroporphyrinogen_deCO2ase_HemE"/>
</dbReference>
<dbReference type="InterPro" id="IPR000257">
    <property type="entry name" value="Uroporphyrinogen_deCOase"/>
</dbReference>
<dbReference type="NCBIfam" id="TIGR01464">
    <property type="entry name" value="hemE"/>
    <property type="match status" value="1"/>
</dbReference>
<dbReference type="PANTHER" id="PTHR21091">
    <property type="entry name" value="METHYLTETRAHYDROFOLATE:HOMOCYSTEINE METHYLTRANSFERASE RELATED"/>
    <property type="match status" value="1"/>
</dbReference>
<dbReference type="PANTHER" id="PTHR21091:SF169">
    <property type="entry name" value="UROPORPHYRINOGEN DECARBOXYLASE"/>
    <property type="match status" value="1"/>
</dbReference>
<dbReference type="Pfam" id="PF01208">
    <property type="entry name" value="URO-D"/>
    <property type="match status" value="1"/>
</dbReference>
<dbReference type="SUPFAM" id="SSF51726">
    <property type="entry name" value="UROD/MetE-like"/>
    <property type="match status" value="1"/>
</dbReference>
<dbReference type="PROSITE" id="PS00906">
    <property type="entry name" value="UROD_1"/>
    <property type="match status" value="1"/>
</dbReference>
<dbReference type="PROSITE" id="PS00907">
    <property type="entry name" value="UROD_2"/>
    <property type="match status" value="1"/>
</dbReference>
<keyword id="KW-0963">Cytoplasm</keyword>
<keyword id="KW-0210">Decarboxylase</keyword>
<keyword id="KW-0456">Lyase</keyword>
<keyword id="KW-0627">Porphyrin biosynthesis</keyword>
<keyword id="KW-1185">Reference proteome</keyword>
<comment type="function">
    <text evidence="1">Catalyzes the decarboxylation of four acetate groups of uroporphyrinogen-III to yield coproporphyrinogen-III.</text>
</comment>
<comment type="catalytic activity">
    <reaction evidence="1">
        <text>uroporphyrinogen III + 4 H(+) = coproporphyrinogen III + 4 CO2</text>
        <dbReference type="Rhea" id="RHEA:19865"/>
        <dbReference type="ChEBI" id="CHEBI:15378"/>
        <dbReference type="ChEBI" id="CHEBI:16526"/>
        <dbReference type="ChEBI" id="CHEBI:57308"/>
        <dbReference type="ChEBI" id="CHEBI:57309"/>
        <dbReference type="EC" id="4.1.1.37"/>
    </reaction>
</comment>
<comment type="pathway">
    <text evidence="1">Porphyrin-containing compound metabolism; protoporphyrin-IX biosynthesis; coproporphyrinogen-III from 5-aminolevulinate: step 4/4.</text>
</comment>
<comment type="subunit">
    <text evidence="1">Homodimer.</text>
</comment>
<comment type="subcellular location">
    <subcellularLocation>
        <location evidence="1">Cytoplasm</location>
    </subcellularLocation>
</comment>
<comment type="similarity">
    <text evidence="1">Belongs to the uroporphyrinogen decarboxylase family.</text>
</comment>
<protein>
    <recommendedName>
        <fullName evidence="1">Uroporphyrinogen decarboxylase</fullName>
        <shortName evidence="1">UPD</shortName>
        <shortName evidence="1">URO-D</shortName>
        <ecNumber evidence="1">4.1.1.37</ecNumber>
    </recommendedName>
</protein>
<accession>A5CVK5</accession>
<proteinExistence type="inferred from homology"/>
<organism>
    <name type="scientific">Vesicomyosocius okutanii subsp. Calyptogena okutanii (strain HA)</name>
    <dbReference type="NCBI Taxonomy" id="412965"/>
    <lineage>
        <taxon>Bacteria</taxon>
        <taxon>Pseudomonadati</taxon>
        <taxon>Pseudomonadota</taxon>
        <taxon>Gammaproteobacteria</taxon>
        <taxon>Candidatus Pseudothioglobaceae</taxon>
        <taxon>Candidatus Vesicomyosocius</taxon>
    </lineage>
</organism>
<evidence type="ECO:0000255" key="1">
    <source>
        <dbReference type="HAMAP-Rule" id="MF_00218"/>
    </source>
</evidence>
<name>DCUP_VESOH</name>
<gene>
    <name evidence="1" type="primary">hemE</name>
    <name type="ordered locus">COSY_0928</name>
</gene>
<reference key="1">
    <citation type="journal article" date="2007" name="Curr. Biol.">
        <title>Reduced genome of the thioautotrophic intracellular symbiont in a deep-sea clam, Calyptogena okutanii.</title>
        <authorList>
            <person name="Kuwahara H."/>
            <person name="Yoshida T."/>
            <person name="Takaki Y."/>
            <person name="Shimamura S."/>
            <person name="Nishi S."/>
            <person name="Harada M."/>
            <person name="Matsuyama K."/>
            <person name="Takishita K."/>
            <person name="Kawato M."/>
            <person name="Uematsu K."/>
            <person name="Fujiwara Y."/>
            <person name="Sato T."/>
            <person name="Kato C."/>
            <person name="Kitagawa M."/>
            <person name="Kato I."/>
            <person name="Maruyama T."/>
        </authorList>
    </citation>
    <scope>NUCLEOTIDE SEQUENCE [LARGE SCALE GENOMIC DNA]</scope>
    <source>
        <strain>HA</strain>
    </source>
</reference>
<sequence>MSFDYINALLKKPTSRTPIWIMRQAGRYLPEYRATRAKAGDFLTLCKSPELACEVTMQPIDRFDLDAAILFSDILTIPDAMGLGLYFMEGEGPKFRNPIKNLKDIKKISTDLNNDLSYVFDGVSTIKKSLNNRVPLIGFSGSPWTLATYMIEGGGRIFASTKKMLFNDPEALHLLLMKLTKSVIAYLNQQIVSGADSVMVFDTWGGVLSEQNYLDFSLYYMAKIVKGVKAQHPNIPITLFSKNGGKYLTHIANTGCDGVGIDWTVELYQVQQEVGNKVAIQGNLDPAVLYATPEVIEREVKKVLSQFKGDTGYIFNLGHGITPDVDPENVKILVDCVHTFSKECR</sequence>
<feature type="chain" id="PRO_0000325707" description="Uroporphyrinogen decarboxylase">
    <location>
        <begin position="1"/>
        <end position="345"/>
    </location>
</feature>
<feature type="binding site" evidence="1">
    <location>
        <begin position="23"/>
        <end position="27"/>
    </location>
    <ligand>
        <name>substrate</name>
    </ligand>
</feature>
<feature type="binding site" evidence="1">
    <location>
        <position position="73"/>
    </location>
    <ligand>
        <name>substrate</name>
    </ligand>
</feature>
<feature type="binding site" evidence="1">
    <location>
        <position position="149"/>
    </location>
    <ligand>
        <name>substrate</name>
    </ligand>
</feature>
<feature type="binding site" evidence="1">
    <location>
        <position position="203"/>
    </location>
    <ligand>
        <name>substrate</name>
    </ligand>
</feature>
<feature type="binding site" evidence="1">
    <location>
        <position position="319"/>
    </location>
    <ligand>
        <name>substrate</name>
    </ligand>
</feature>
<feature type="site" description="Transition state stabilizer" evidence="1">
    <location>
        <position position="73"/>
    </location>
</feature>